<protein>
    <recommendedName>
        <fullName evidence="1">Multifunctional CCA protein</fullName>
    </recommendedName>
    <domain>
        <recommendedName>
            <fullName evidence="1">CCA-adding enzyme</fullName>
            <ecNumber evidence="1">2.7.7.72</ecNumber>
        </recommendedName>
        <alternativeName>
            <fullName evidence="1">CCA tRNA nucleotidyltransferase</fullName>
        </alternativeName>
        <alternativeName>
            <fullName evidence="1">tRNA CCA-pyrophosphorylase</fullName>
        </alternativeName>
        <alternativeName>
            <fullName evidence="1">tRNA adenylyl-/cytidylyl-transferase</fullName>
        </alternativeName>
        <alternativeName>
            <fullName evidence="1">tRNA nucleotidyltransferase</fullName>
        </alternativeName>
        <alternativeName>
            <fullName evidence="1">tRNA-NT</fullName>
        </alternativeName>
    </domain>
    <domain>
        <recommendedName>
            <fullName evidence="1">2'-nucleotidase</fullName>
            <ecNumber evidence="1">3.1.3.-</ecNumber>
        </recommendedName>
    </domain>
    <domain>
        <recommendedName>
            <fullName evidence="1">2',3'-cyclic phosphodiesterase</fullName>
            <ecNumber evidence="1">3.1.4.-</ecNumber>
        </recommendedName>
    </domain>
    <domain>
        <recommendedName>
            <fullName evidence="1">Phosphatase</fullName>
            <ecNumber evidence="1">3.1.3.-</ecNumber>
        </recommendedName>
    </domain>
</protein>
<comment type="function">
    <text evidence="1">Catalyzes the addition and repair of the essential 3'-terminal CCA sequence in tRNAs without using a nucleic acid template. Adds these three nucleotides in the order of C, C, and A to the tRNA nucleotide-73, using CTP and ATP as substrates and producing inorganic pyrophosphate. tRNA 3'-terminal CCA addition is required both for tRNA processing and repair. Also involved in tRNA surveillance by mediating tandem CCA addition to generate a CCACCA at the 3' terminus of unstable tRNAs. While stable tRNAs receive only 3'-terminal CCA, unstable tRNAs are marked with CCACCA and rapidly degraded.</text>
</comment>
<comment type="catalytic activity">
    <reaction evidence="1">
        <text>a tRNA precursor + 2 CTP + ATP = a tRNA with a 3' CCA end + 3 diphosphate</text>
        <dbReference type="Rhea" id="RHEA:14433"/>
        <dbReference type="Rhea" id="RHEA-COMP:10465"/>
        <dbReference type="Rhea" id="RHEA-COMP:10468"/>
        <dbReference type="ChEBI" id="CHEBI:30616"/>
        <dbReference type="ChEBI" id="CHEBI:33019"/>
        <dbReference type="ChEBI" id="CHEBI:37563"/>
        <dbReference type="ChEBI" id="CHEBI:74896"/>
        <dbReference type="ChEBI" id="CHEBI:83071"/>
        <dbReference type="EC" id="2.7.7.72"/>
    </reaction>
</comment>
<comment type="catalytic activity">
    <reaction evidence="1">
        <text>a tRNA with a 3' CCA end + 2 CTP + ATP = a tRNA with a 3' CCACCA end + 3 diphosphate</text>
        <dbReference type="Rhea" id="RHEA:76235"/>
        <dbReference type="Rhea" id="RHEA-COMP:10468"/>
        <dbReference type="Rhea" id="RHEA-COMP:18655"/>
        <dbReference type="ChEBI" id="CHEBI:30616"/>
        <dbReference type="ChEBI" id="CHEBI:33019"/>
        <dbReference type="ChEBI" id="CHEBI:37563"/>
        <dbReference type="ChEBI" id="CHEBI:83071"/>
        <dbReference type="ChEBI" id="CHEBI:195187"/>
    </reaction>
    <physiologicalReaction direction="left-to-right" evidence="1">
        <dbReference type="Rhea" id="RHEA:76236"/>
    </physiologicalReaction>
</comment>
<comment type="cofactor">
    <cofactor evidence="1">
        <name>Mg(2+)</name>
        <dbReference type="ChEBI" id="CHEBI:18420"/>
    </cofactor>
    <text evidence="1">Magnesium is required for nucleotidyltransferase activity.</text>
</comment>
<comment type="cofactor">
    <cofactor evidence="1">
        <name>Ni(2+)</name>
        <dbReference type="ChEBI" id="CHEBI:49786"/>
    </cofactor>
    <text evidence="1">Nickel for phosphatase activity.</text>
</comment>
<comment type="subunit">
    <text evidence="1">Monomer. Can also form homodimers and oligomers.</text>
</comment>
<comment type="domain">
    <text evidence="1">Comprises two domains: an N-terminal domain containing the nucleotidyltransferase activity and a C-terminal HD domain associated with both phosphodiesterase and phosphatase activities.</text>
</comment>
<comment type="miscellaneous">
    <text evidence="1">A single active site specifically recognizes both ATP and CTP and is responsible for their addition.</text>
</comment>
<comment type="similarity">
    <text evidence="1">Belongs to the tRNA nucleotidyltransferase/poly(A) polymerase family. Bacterial CCA-adding enzyme type 1 subfamily.</text>
</comment>
<evidence type="ECO:0000255" key="1">
    <source>
        <dbReference type="HAMAP-Rule" id="MF_01261"/>
    </source>
</evidence>
<reference key="1">
    <citation type="submission" date="2008-06" db="EMBL/GenBank/DDBJ databases">
        <title>Complete sequence of Stenotrophomonas maltophilia R551-3.</title>
        <authorList>
            <consortium name="US DOE Joint Genome Institute"/>
            <person name="Lucas S."/>
            <person name="Copeland A."/>
            <person name="Lapidus A."/>
            <person name="Glavina del Rio T."/>
            <person name="Dalin E."/>
            <person name="Tice H."/>
            <person name="Pitluck S."/>
            <person name="Chain P."/>
            <person name="Malfatti S."/>
            <person name="Shin M."/>
            <person name="Vergez L."/>
            <person name="Lang D."/>
            <person name="Schmutz J."/>
            <person name="Larimer F."/>
            <person name="Land M."/>
            <person name="Hauser L."/>
            <person name="Kyrpides N."/>
            <person name="Mikhailova N."/>
            <person name="Taghavi S."/>
            <person name="Monchy S."/>
            <person name="Newman L."/>
            <person name="Vangronsveld J."/>
            <person name="van der Lelie D."/>
            <person name="Richardson P."/>
        </authorList>
    </citation>
    <scope>NUCLEOTIDE SEQUENCE [LARGE SCALE GENOMIC DNA]</scope>
    <source>
        <strain>R551-3</strain>
    </source>
</reference>
<proteinExistence type="inferred from homology"/>
<sequence length="406" mass="45003">MKIYLVGGAVRDRLLQRPAGDRDWVVVGATPAQMEAQGYSAVGRDFPVFLHPKTGEEYALARTERKSGRGYRGFVVDADPAVTLEEDLQRRDFTINAIACDEDTGTLVDPYGGVRDIEQRVLRHVGPAFVEDPLRVLRAARFMAHFAPLDFTVAPETMDLMRNVAASGELDALVPERVWQELRKALVSAQPSAFLRTLHDAHALGPILPELEALYGVPQRAEFHPEVDTGIHQEMVSDMAAKLAPGDDLVGFAALTHDLGKGLTPPEEWPRHIMHEQRGIKPLKELCARLRVPTEHQQLAEAVCREHLNVHRIDELRDATVLELLGRCDALRRPERVARIALCCEADKRGRLGFEDSDYPQGETLKRLHQAALSVQARDLDTTHLKGPAIGEALAKARVKAIAAAR</sequence>
<feature type="chain" id="PRO_1000140056" description="Multifunctional CCA protein">
    <location>
        <begin position="1"/>
        <end position="406"/>
    </location>
</feature>
<feature type="domain" description="HD" evidence="1">
    <location>
        <begin position="229"/>
        <end position="331"/>
    </location>
</feature>
<feature type="binding site" evidence="1">
    <location>
        <position position="8"/>
    </location>
    <ligand>
        <name>ATP</name>
        <dbReference type="ChEBI" id="CHEBI:30616"/>
    </ligand>
</feature>
<feature type="binding site" evidence="1">
    <location>
        <position position="8"/>
    </location>
    <ligand>
        <name>CTP</name>
        <dbReference type="ChEBI" id="CHEBI:37563"/>
    </ligand>
</feature>
<feature type="binding site" evidence="1">
    <location>
        <position position="11"/>
    </location>
    <ligand>
        <name>ATP</name>
        <dbReference type="ChEBI" id="CHEBI:30616"/>
    </ligand>
</feature>
<feature type="binding site" evidence="1">
    <location>
        <position position="11"/>
    </location>
    <ligand>
        <name>CTP</name>
        <dbReference type="ChEBI" id="CHEBI:37563"/>
    </ligand>
</feature>
<feature type="binding site" evidence="1">
    <location>
        <position position="21"/>
    </location>
    <ligand>
        <name>Mg(2+)</name>
        <dbReference type="ChEBI" id="CHEBI:18420"/>
    </ligand>
</feature>
<feature type="binding site" evidence="1">
    <location>
        <position position="23"/>
    </location>
    <ligand>
        <name>Mg(2+)</name>
        <dbReference type="ChEBI" id="CHEBI:18420"/>
    </ligand>
</feature>
<feature type="binding site" evidence="1">
    <location>
        <position position="91"/>
    </location>
    <ligand>
        <name>ATP</name>
        <dbReference type="ChEBI" id="CHEBI:30616"/>
    </ligand>
</feature>
<feature type="binding site" evidence="1">
    <location>
        <position position="91"/>
    </location>
    <ligand>
        <name>CTP</name>
        <dbReference type="ChEBI" id="CHEBI:37563"/>
    </ligand>
</feature>
<feature type="binding site" evidence="1">
    <location>
        <position position="138"/>
    </location>
    <ligand>
        <name>ATP</name>
        <dbReference type="ChEBI" id="CHEBI:30616"/>
    </ligand>
</feature>
<feature type="binding site" evidence="1">
    <location>
        <position position="138"/>
    </location>
    <ligand>
        <name>CTP</name>
        <dbReference type="ChEBI" id="CHEBI:37563"/>
    </ligand>
</feature>
<feature type="binding site" evidence="1">
    <location>
        <position position="141"/>
    </location>
    <ligand>
        <name>ATP</name>
        <dbReference type="ChEBI" id="CHEBI:30616"/>
    </ligand>
</feature>
<feature type="binding site" evidence="1">
    <location>
        <position position="141"/>
    </location>
    <ligand>
        <name>CTP</name>
        <dbReference type="ChEBI" id="CHEBI:37563"/>
    </ligand>
</feature>
<gene>
    <name evidence="1" type="primary">cca</name>
    <name type="ordered locus">Smal_3415</name>
</gene>
<accession>B4SIY9</accession>
<keyword id="KW-0067">ATP-binding</keyword>
<keyword id="KW-0378">Hydrolase</keyword>
<keyword id="KW-0460">Magnesium</keyword>
<keyword id="KW-0479">Metal-binding</keyword>
<keyword id="KW-0511">Multifunctional enzyme</keyword>
<keyword id="KW-0533">Nickel</keyword>
<keyword id="KW-0547">Nucleotide-binding</keyword>
<keyword id="KW-0548">Nucleotidyltransferase</keyword>
<keyword id="KW-0692">RNA repair</keyword>
<keyword id="KW-0694">RNA-binding</keyword>
<keyword id="KW-0808">Transferase</keyword>
<keyword id="KW-0819">tRNA processing</keyword>
<name>CCA_STRM5</name>
<dbReference type="EC" id="2.7.7.72" evidence="1"/>
<dbReference type="EC" id="3.1.3.-" evidence="1"/>
<dbReference type="EC" id="3.1.4.-" evidence="1"/>
<dbReference type="EMBL" id="CP001111">
    <property type="protein sequence ID" value="ACF53114.1"/>
    <property type="molecule type" value="Genomic_DNA"/>
</dbReference>
<dbReference type="RefSeq" id="WP_012512103.1">
    <property type="nucleotide sequence ID" value="NC_011071.1"/>
</dbReference>
<dbReference type="SMR" id="B4SIY9"/>
<dbReference type="STRING" id="391008.Smal_3415"/>
<dbReference type="KEGG" id="smt:Smal_3415"/>
<dbReference type="eggNOG" id="COG0617">
    <property type="taxonomic scope" value="Bacteria"/>
</dbReference>
<dbReference type="HOGENOM" id="CLU_015961_1_1_6"/>
<dbReference type="OrthoDB" id="9805698at2"/>
<dbReference type="Proteomes" id="UP000001867">
    <property type="component" value="Chromosome"/>
</dbReference>
<dbReference type="GO" id="GO:0005524">
    <property type="term" value="F:ATP binding"/>
    <property type="evidence" value="ECO:0007669"/>
    <property type="project" value="UniProtKB-UniRule"/>
</dbReference>
<dbReference type="GO" id="GO:0004810">
    <property type="term" value="F:CCA tRNA nucleotidyltransferase activity"/>
    <property type="evidence" value="ECO:0007669"/>
    <property type="project" value="UniProtKB-UniRule"/>
</dbReference>
<dbReference type="GO" id="GO:0004112">
    <property type="term" value="F:cyclic-nucleotide phosphodiesterase activity"/>
    <property type="evidence" value="ECO:0007669"/>
    <property type="project" value="UniProtKB-UniRule"/>
</dbReference>
<dbReference type="GO" id="GO:0000287">
    <property type="term" value="F:magnesium ion binding"/>
    <property type="evidence" value="ECO:0007669"/>
    <property type="project" value="UniProtKB-UniRule"/>
</dbReference>
<dbReference type="GO" id="GO:0016791">
    <property type="term" value="F:phosphatase activity"/>
    <property type="evidence" value="ECO:0007669"/>
    <property type="project" value="UniProtKB-UniRule"/>
</dbReference>
<dbReference type="GO" id="GO:0000049">
    <property type="term" value="F:tRNA binding"/>
    <property type="evidence" value="ECO:0007669"/>
    <property type="project" value="UniProtKB-UniRule"/>
</dbReference>
<dbReference type="GO" id="GO:0042245">
    <property type="term" value="P:RNA repair"/>
    <property type="evidence" value="ECO:0007669"/>
    <property type="project" value="UniProtKB-KW"/>
</dbReference>
<dbReference type="GO" id="GO:0001680">
    <property type="term" value="P:tRNA 3'-terminal CCA addition"/>
    <property type="evidence" value="ECO:0007669"/>
    <property type="project" value="UniProtKB-UniRule"/>
</dbReference>
<dbReference type="CDD" id="cd00077">
    <property type="entry name" value="HDc"/>
    <property type="match status" value="1"/>
</dbReference>
<dbReference type="CDD" id="cd05398">
    <property type="entry name" value="NT_ClassII-CCAase"/>
    <property type="match status" value="1"/>
</dbReference>
<dbReference type="Gene3D" id="3.30.460.10">
    <property type="entry name" value="Beta Polymerase, domain 2"/>
    <property type="match status" value="1"/>
</dbReference>
<dbReference type="Gene3D" id="1.10.3090.10">
    <property type="entry name" value="cca-adding enzyme, domain 2"/>
    <property type="match status" value="1"/>
</dbReference>
<dbReference type="HAMAP" id="MF_01261">
    <property type="entry name" value="CCA_bact_type1"/>
    <property type="match status" value="1"/>
</dbReference>
<dbReference type="InterPro" id="IPR012006">
    <property type="entry name" value="CCA_bact"/>
</dbReference>
<dbReference type="InterPro" id="IPR003607">
    <property type="entry name" value="HD/PDEase_dom"/>
</dbReference>
<dbReference type="InterPro" id="IPR006674">
    <property type="entry name" value="HD_domain"/>
</dbReference>
<dbReference type="InterPro" id="IPR043519">
    <property type="entry name" value="NT_sf"/>
</dbReference>
<dbReference type="InterPro" id="IPR002646">
    <property type="entry name" value="PolA_pol_head_dom"/>
</dbReference>
<dbReference type="InterPro" id="IPR032828">
    <property type="entry name" value="PolyA_RNA-bd"/>
</dbReference>
<dbReference type="InterPro" id="IPR050124">
    <property type="entry name" value="tRNA_CCA-adding_enzyme"/>
</dbReference>
<dbReference type="NCBIfam" id="NF008137">
    <property type="entry name" value="PRK10885.1"/>
    <property type="match status" value="1"/>
</dbReference>
<dbReference type="PANTHER" id="PTHR47545">
    <property type="entry name" value="MULTIFUNCTIONAL CCA PROTEIN"/>
    <property type="match status" value="1"/>
</dbReference>
<dbReference type="PANTHER" id="PTHR47545:SF1">
    <property type="entry name" value="MULTIFUNCTIONAL CCA PROTEIN"/>
    <property type="match status" value="1"/>
</dbReference>
<dbReference type="Pfam" id="PF01966">
    <property type="entry name" value="HD"/>
    <property type="match status" value="1"/>
</dbReference>
<dbReference type="Pfam" id="PF01743">
    <property type="entry name" value="PolyA_pol"/>
    <property type="match status" value="1"/>
</dbReference>
<dbReference type="Pfam" id="PF12627">
    <property type="entry name" value="PolyA_pol_RNAbd"/>
    <property type="match status" value="1"/>
</dbReference>
<dbReference type="PIRSF" id="PIRSF000813">
    <property type="entry name" value="CCA_bact"/>
    <property type="match status" value="1"/>
</dbReference>
<dbReference type="SUPFAM" id="SSF81301">
    <property type="entry name" value="Nucleotidyltransferase"/>
    <property type="match status" value="1"/>
</dbReference>
<dbReference type="SUPFAM" id="SSF81891">
    <property type="entry name" value="Poly A polymerase C-terminal region-like"/>
    <property type="match status" value="1"/>
</dbReference>
<dbReference type="PROSITE" id="PS51831">
    <property type="entry name" value="HD"/>
    <property type="match status" value="1"/>
</dbReference>
<organism>
    <name type="scientific">Stenotrophomonas maltophilia (strain R551-3)</name>
    <dbReference type="NCBI Taxonomy" id="391008"/>
    <lineage>
        <taxon>Bacteria</taxon>
        <taxon>Pseudomonadati</taxon>
        <taxon>Pseudomonadota</taxon>
        <taxon>Gammaproteobacteria</taxon>
        <taxon>Lysobacterales</taxon>
        <taxon>Lysobacteraceae</taxon>
        <taxon>Stenotrophomonas</taxon>
        <taxon>Stenotrophomonas maltophilia group</taxon>
    </lineage>
</organism>